<keyword id="KW-0256">Endoplasmic reticulum</keyword>
<keyword id="KW-0444">Lipid biosynthesis</keyword>
<keyword id="KW-0443">Lipid metabolism</keyword>
<keyword id="KW-0472">Membrane</keyword>
<keyword id="KW-0489">Methyltransferase</keyword>
<keyword id="KW-0594">Phospholipid biosynthesis</keyword>
<keyword id="KW-1208">Phospholipid metabolism</keyword>
<keyword id="KW-1185">Reference proteome</keyword>
<keyword id="KW-0949">S-adenosyl-L-methionine</keyword>
<keyword id="KW-0808">Transferase</keyword>
<keyword id="KW-0812">Transmembrane</keyword>
<keyword id="KW-1133">Transmembrane helix</keyword>
<name>CHO2_AJECG</name>
<accession>C0NLX2</accession>
<feature type="chain" id="PRO_0000405867" description="Phosphatidylethanolamine N-methyltransferase">
    <location>
        <begin position="1"/>
        <end position="978"/>
    </location>
</feature>
<feature type="topological domain" description="Lumenal" evidence="1">
    <location>
        <begin position="1"/>
        <end position="89"/>
    </location>
</feature>
<feature type="transmembrane region" description="Helical" evidence="1">
    <location>
        <begin position="90"/>
        <end position="110"/>
    </location>
</feature>
<feature type="topological domain" description="Cytoplasmic" evidence="1">
    <location>
        <begin position="111"/>
        <end position="113"/>
    </location>
</feature>
<feature type="transmembrane region" description="Helical" evidence="1">
    <location>
        <begin position="114"/>
        <end position="134"/>
    </location>
</feature>
<feature type="topological domain" description="Lumenal" evidence="1">
    <location>
        <begin position="135"/>
        <end position="199"/>
    </location>
</feature>
<feature type="transmembrane region" description="Helical" evidence="1">
    <location>
        <begin position="200"/>
        <end position="220"/>
    </location>
</feature>
<feature type="topological domain" description="Cytoplasmic" evidence="1">
    <location>
        <begin position="221"/>
        <end position="227"/>
    </location>
</feature>
<feature type="transmembrane region" description="Helical" evidence="1">
    <location>
        <begin position="228"/>
        <end position="248"/>
    </location>
</feature>
<feature type="topological domain" description="Lumenal" evidence="1">
    <location>
        <begin position="249"/>
        <end position="281"/>
    </location>
</feature>
<feature type="transmembrane region" description="Helical" evidence="1">
    <location>
        <begin position="282"/>
        <end position="302"/>
    </location>
</feature>
<feature type="topological domain" description="Cytoplasmic" evidence="1">
    <location>
        <begin position="303"/>
        <end position="304"/>
    </location>
</feature>
<feature type="transmembrane region" description="Helical" evidence="1">
    <location>
        <begin position="305"/>
        <end position="325"/>
    </location>
</feature>
<feature type="topological domain" description="Lumenal" evidence="1">
    <location>
        <begin position="326"/>
        <end position="399"/>
    </location>
</feature>
<feature type="transmembrane region" description="Helical" evidence="1">
    <location>
        <begin position="400"/>
        <end position="420"/>
    </location>
</feature>
<feature type="topological domain" description="Cytoplasmic" evidence="1">
    <location>
        <position position="421"/>
    </location>
</feature>
<feature type="transmembrane region" description="Helical" evidence="1">
    <location>
        <begin position="422"/>
        <end position="442"/>
    </location>
</feature>
<feature type="topological domain" description="Lumenal" evidence="1">
    <location>
        <begin position="443"/>
        <end position="473"/>
    </location>
</feature>
<feature type="transmembrane region" description="Helical" evidence="1">
    <location>
        <begin position="474"/>
        <end position="493"/>
    </location>
</feature>
<feature type="topological domain" description="Cytoplasmic" evidence="1">
    <location>
        <begin position="494"/>
        <end position="498"/>
    </location>
</feature>
<feature type="transmembrane region" description="Helical" evidence="1">
    <location>
        <begin position="499"/>
        <end position="519"/>
    </location>
</feature>
<feature type="topological domain" description="Lumenal" evidence="1">
    <location>
        <begin position="520"/>
        <end position="564"/>
    </location>
</feature>
<feature type="transmembrane region" description="Helical" evidence="1">
    <location>
        <begin position="565"/>
        <end position="585"/>
    </location>
</feature>
<feature type="topological domain" description="Cytoplasmic" evidence="1">
    <location>
        <begin position="586"/>
        <end position="978"/>
    </location>
</feature>
<feature type="region of interest" description="Disordered" evidence="2">
    <location>
        <begin position="1"/>
        <end position="63"/>
    </location>
</feature>
<feature type="region of interest" description="Disordered" evidence="2">
    <location>
        <begin position="703"/>
        <end position="724"/>
    </location>
</feature>
<feature type="compositionally biased region" description="Polar residues" evidence="2">
    <location>
        <begin position="1"/>
        <end position="15"/>
    </location>
</feature>
<feature type="compositionally biased region" description="Polar residues" evidence="2">
    <location>
        <begin position="703"/>
        <end position="713"/>
    </location>
</feature>
<feature type="compositionally biased region" description="Basic and acidic residues" evidence="2">
    <location>
        <begin position="714"/>
        <end position="724"/>
    </location>
</feature>
<proteinExistence type="inferred from homology"/>
<comment type="function">
    <text evidence="1">Catalyzes the first step of the methylation pathway of phosphatidylcholine biosynthesis, the SAM-dependent methylation of phosphatidylethanolamine (PE) to phosphatidylmonomethylethanolamine (PMME).</text>
</comment>
<comment type="catalytic activity">
    <reaction evidence="1">
        <text>a 1,2-diacyl-sn-glycero-3-phosphoethanolamine + S-adenosyl-L-methionine = a 1,2-diacyl-sn-glycero-3-phospho-N-methylethanolamine + S-adenosyl-L-homocysteine + H(+)</text>
        <dbReference type="Rhea" id="RHEA:11164"/>
        <dbReference type="ChEBI" id="CHEBI:15378"/>
        <dbReference type="ChEBI" id="CHEBI:57856"/>
        <dbReference type="ChEBI" id="CHEBI:59789"/>
        <dbReference type="ChEBI" id="CHEBI:64573"/>
        <dbReference type="ChEBI" id="CHEBI:64612"/>
        <dbReference type="EC" id="2.1.1.17"/>
    </reaction>
</comment>
<comment type="pathway">
    <text evidence="1">Phospholipid metabolism; phosphatidylcholine biosynthesis.</text>
</comment>
<comment type="subcellular location">
    <subcellularLocation>
        <location evidence="1">Endoplasmic reticulum membrane</location>
        <topology evidence="1">Multi-pass membrane protein</topology>
    </subcellularLocation>
</comment>
<comment type="similarity">
    <text evidence="1">Belongs to the class VI-like SAM-binding methyltransferase superfamily. CHO2 family.</text>
</comment>
<evidence type="ECO:0000255" key="1">
    <source>
        <dbReference type="HAMAP-Rule" id="MF_03217"/>
    </source>
</evidence>
<evidence type="ECO:0000256" key="2">
    <source>
        <dbReference type="SAM" id="MobiDB-lite"/>
    </source>
</evidence>
<dbReference type="EC" id="2.1.1.17" evidence="1"/>
<dbReference type="EMBL" id="GG663367">
    <property type="protein sequence ID" value="EEH07623.1"/>
    <property type="molecule type" value="Genomic_DNA"/>
</dbReference>
<dbReference type="SMR" id="C0NLX2"/>
<dbReference type="FunCoup" id="C0NLX2">
    <property type="interactions" value="62"/>
</dbReference>
<dbReference type="STRING" id="447093.C0NLX2"/>
<dbReference type="VEuPathDB" id="FungiDB:I7I50_11259"/>
<dbReference type="HOGENOM" id="CLU_005987_0_0_1"/>
<dbReference type="InParanoid" id="C0NLX2"/>
<dbReference type="UniPathway" id="UPA00753"/>
<dbReference type="Proteomes" id="UP000001631">
    <property type="component" value="Unassembled WGS sequence"/>
</dbReference>
<dbReference type="GO" id="GO:0005789">
    <property type="term" value="C:endoplasmic reticulum membrane"/>
    <property type="evidence" value="ECO:0007669"/>
    <property type="project" value="UniProtKB-SubCell"/>
</dbReference>
<dbReference type="GO" id="GO:0004608">
    <property type="term" value="F:phosphatidylethanolamine N-methyltransferase activity"/>
    <property type="evidence" value="ECO:0007669"/>
    <property type="project" value="UniProtKB-UniRule"/>
</dbReference>
<dbReference type="GO" id="GO:0032259">
    <property type="term" value="P:methylation"/>
    <property type="evidence" value="ECO:0007669"/>
    <property type="project" value="UniProtKB-KW"/>
</dbReference>
<dbReference type="GO" id="GO:0006656">
    <property type="term" value="P:phosphatidylcholine biosynthetic process"/>
    <property type="evidence" value="ECO:0007669"/>
    <property type="project" value="UniProtKB-UniRule"/>
</dbReference>
<dbReference type="FunFam" id="2.60.40.2840:FF:000006">
    <property type="entry name" value="Phosphatidylethanolamine N-methyltransferase"/>
    <property type="match status" value="1"/>
</dbReference>
<dbReference type="Gene3D" id="2.60.40.2840">
    <property type="match status" value="1"/>
</dbReference>
<dbReference type="HAMAP" id="MF_03217">
    <property type="entry name" value="PEMT"/>
    <property type="match status" value="1"/>
</dbReference>
<dbReference type="InterPro" id="IPR007318">
    <property type="entry name" value="Phopholipid_MeTrfase"/>
</dbReference>
<dbReference type="InterPro" id="IPR016219">
    <property type="entry name" value="Phosphatid-EA_MeTrfase_fun"/>
</dbReference>
<dbReference type="PANTHER" id="PTHR32138">
    <property type="entry name" value="PHOSPHATIDYLETHANOLAMINE N-METHYLTRANSFERASE"/>
    <property type="match status" value="1"/>
</dbReference>
<dbReference type="PANTHER" id="PTHR32138:SF0">
    <property type="entry name" value="PHOSPHATIDYLETHANOLAMINE N-METHYLTRANSFERASE"/>
    <property type="match status" value="1"/>
</dbReference>
<dbReference type="Pfam" id="PF04191">
    <property type="entry name" value="PEMT"/>
    <property type="match status" value="2"/>
</dbReference>
<dbReference type="PIRSF" id="PIRSF000383">
    <property type="entry name" value="PEAMT"/>
    <property type="match status" value="1"/>
</dbReference>
<dbReference type="PROSITE" id="PS51598">
    <property type="entry name" value="SAM_CHO2"/>
    <property type="match status" value="1"/>
</dbReference>
<organism>
    <name type="scientific">Ajellomyces capsulatus (strain G186AR / H82 / ATCC MYA-2454 / RMSCC 2432)</name>
    <name type="common">Darling's disease fungus</name>
    <name type="synonym">Histoplasma capsulatum</name>
    <dbReference type="NCBI Taxonomy" id="447093"/>
    <lineage>
        <taxon>Eukaryota</taxon>
        <taxon>Fungi</taxon>
        <taxon>Dikarya</taxon>
        <taxon>Ascomycota</taxon>
        <taxon>Pezizomycotina</taxon>
        <taxon>Eurotiomycetes</taxon>
        <taxon>Eurotiomycetidae</taxon>
        <taxon>Onygenales</taxon>
        <taxon>Ajellomycetaceae</taxon>
        <taxon>Histoplasma</taxon>
    </lineage>
</organism>
<gene>
    <name type="primary">CHO2</name>
    <name type="ORF">HCBG_04502</name>
</gene>
<protein>
    <recommendedName>
        <fullName evidence="1">Phosphatidylethanolamine N-methyltransferase</fullName>
        <shortName evidence="1">PE methyltransferase</shortName>
        <shortName evidence="1">PEAMT</shortName>
        <shortName evidence="1">PEMT</shortName>
        <ecNumber evidence="1">2.1.1.17</ecNumber>
    </recommendedName>
</protein>
<sequence>MSEQANSSGIESLSNGLRERNAQASKPIGDGEVTSQSLEDKLQVEEGDAADAEKKTFGRTPDGKVFTVPPTRDMVSQLLSPSEPKNISDIFVLAILGCHILLLWCLPSSFRIAAFAVIFLFWRASYNIGIGWLLHMQSNGRTLVCWAKKSNIFVNPSTGQNPHPTLYKMLKWELETKISEQYSFDEAPTEYNTWLVFRRVVDLILMCDFTSYCLFAIACGGRPAGESFIMLALRWTTGMSLVLFNLWVKLDAHRVVKDFAWYWGDFFYLIDQELTFDGVFEMAPHPMYSVGYAGYYGISLMAASYKVLFISILAHAAQFAFLVLVENPHIEKTYNVPPPRKRVAVDTDTKLQEDENSHEGSVVSDIANSAPVMPALQPVSMHNLLGLHNIDLYRSTDQSVLLAQLLFFALTTVTPSTPVYQFCFVLNAALWRIWYSVGIGYILNRQSNCKMWTRHFVKYGESNHEAWRQWKGTYHLSMTMTYASFIAAAWKMYSFPQDWGYGLVLLRHILGASLIALQIWTSTSIYESLGEFGWFFGDFFFDQSPKLTYSGIYRFLNNPERVLGLAGVWGAVLITSTKSLVFLALLSHTLTLAFIQLVERPHMQKLYGQSLRRDAGLVRSLKRSLPPSLKQIHGSVDKILDESFEFIEEFIEAARPKLATGVQTFVKDTSALFQKYPARVTISRLEPDLAGYDLKDYSITLEGTQPSQPTQFERASDKEGERARSMQFRRGEQENLIFEYGAPIKVKWTAPLNHSKKDWIGLYMVTDNTSREVTSVASQGRWIATNQASFDSETCEQGLISSDIVLKITREDCEPIDVASGEMVFSGDKLWWTQGVFEFRYHHNGKHNVMAVSRPFEIRIGRFDEDIVEADNYGLVRAAVEAALLPVVQNCFDRDPEIAPQTAEEHYGCLVERDGKYSKRVVFAVQHMFGIEFAPEVVRADGNVRNLAWRICNAKKVLAPYSMSRSNGASTPTTEHED</sequence>
<reference key="1">
    <citation type="submission" date="2009-02" db="EMBL/GenBank/DDBJ databases">
        <title>The genome sequence of Ajellomyces capsulatus strain G186AR.</title>
        <authorList>
            <person name="Champion M."/>
            <person name="Cuomo C.A."/>
            <person name="Ma L.-J."/>
            <person name="Henn M.R."/>
            <person name="Sil A."/>
            <person name="Goldman B."/>
            <person name="Young S.K."/>
            <person name="Kodira C.D."/>
            <person name="Zeng Q."/>
            <person name="Koehrsen M."/>
            <person name="Alvarado L."/>
            <person name="Berlin A."/>
            <person name="Borenstein D."/>
            <person name="Chen Z."/>
            <person name="Engels R."/>
            <person name="Freedman E."/>
            <person name="Gellesch M."/>
            <person name="Goldberg J."/>
            <person name="Griggs A."/>
            <person name="Gujja S."/>
            <person name="Heiman D."/>
            <person name="Hepburn T."/>
            <person name="Howarth C."/>
            <person name="Jen D."/>
            <person name="Larson L."/>
            <person name="Lewis B."/>
            <person name="Mehta T."/>
            <person name="Park D."/>
            <person name="Pearson M."/>
            <person name="Roberts A."/>
            <person name="Saif S."/>
            <person name="Shea T."/>
            <person name="Shenoy N."/>
            <person name="Sisk P."/>
            <person name="Stolte C."/>
            <person name="Sykes S."/>
            <person name="Walk T."/>
            <person name="White J."/>
            <person name="Yandava C."/>
            <person name="Klein B."/>
            <person name="McEwen J.G."/>
            <person name="Puccia R."/>
            <person name="Goldman G.H."/>
            <person name="Felipe M.S."/>
            <person name="Nino-Vega G."/>
            <person name="San-Blas G."/>
            <person name="Taylor J."/>
            <person name="Mendoza L."/>
            <person name="Galagan J.E."/>
            <person name="Nusbaum C."/>
            <person name="Birren B.W."/>
        </authorList>
    </citation>
    <scope>NUCLEOTIDE SEQUENCE [LARGE SCALE GENOMIC DNA]</scope>
    <source>
        <strain>G186AR / H82 / ATCC MYA-2454 / RMSCC 2432</strain>
    </source>
</reference>